<sequence>MMSDLTPIFRKYVAVIDDARNEQNGIDDHVERKQEDFGNSNETCEMFRDSFIKECARLLKFLVELNKVIKQIEKNYLDDFNMSDAEKDEFDMECRLQIQQYFKKFEFLENYEMERHNLSLKRFQSKSHRWSKILSNKNDNTKHVIHPQDIENGVYEFRLGVLRCLNLWIKYVSSKFTTIQQERLILENKMNFNSTPMPTLSNNADDFSADAIDISVSQSAPVETVQDEVKHYEETISKLTQEQLQVLETEHSELLNQKNEQLKKVETINKTILDIVNIQNELSNHLTVQSQNINLMLNNQDDIELNIKKGNKELRKAKRAAGRTAKMTTYGAIIMGVFILFLDYVG</sequence>
<name>UFE1_YEAST</name>
<reference key="1">
    <citation type="journal article" date="1996" name="Curr. Genet.">
        <title>Molecular analysis of UFE1, a Saccharomyces cerevisiae gene essential for spore formation and vegetative growth.</title>
        <authorList>
            <person name="Downing T.A."/>
            <person name="Storms R.K."/>
        </authorList>
    </citation>
    <scope>NUCLEOTIDE SEQUENCE [GENOMIC DNA]</scope>
    <source>
        <strain>ATCC 38626 / AH22 / NRRL Y-12843</strain>
    </source>
</reference>
<reference key="2">
    <citation type="journal article" date="1997" name="EMBO J.">
        <title>A novel SNARE complex implicated in vesicle fusion with the endoplasmic reticulum.</title>
        <authorList>
            <person name="Lewis M.J."/>
            <person name="Rayner J.C."/>
            <person name="Pelham H.R.B."/>
        </authorList>
    </citation>
    <scope>NUCLEOTIDE SEQUENCE [GENOMIC DNA]</scope>
</reference>
<reference key="3">
    <citation type="journal article" date="1997" name="Yeast">
        <title>The sequence of a 54.7 kb fragment of yeast chromosome XV reveals the presence of two tRNAs and 24 new open reading frames.</title>
        <authorList>
            <person name="Valens M."/>
            <person name="Bohn C."/>
            <person name="Daignan-Fornier B."/>
            <person name="Dang V.-D."/>
            <person name="Bolotin-Fukuhara M."/>
        </authorList>
    </citation>
    <scope>NUCLEOTIDE SEQUENCE [GENOMIC DNA]</scope>
</reference>
<reference key="4">
    <citation type="journal article" date="1997" name="Nature">
        <title>The nucleotide sequence of Saccharomyces cerevisiae chromosome XV.</title>
        <authorList>
            <person name="Dujon B."/>
            <person name="Albermann K."/>
            <person name="Aldea M."/>
            <person name="Alexandraki D."/>
            <person name="Ansorge W."/>
            <person name="Arino J."/>
            <person name="Benes V."/>
            <person name="Bohn C."/>
            <person name="Bolotin-Fukuhara M."/>
            <person name="Bordonne R."/>
            <person name="Boyer J."/>
            <person name="Camasses A."/>
            <person name="Casamayor A."/>
            <person name="Casas C."/>
            <person name="Cheret G."/>
            <person name="Cziepluch C."/>
            <person name="Daignan-Fornier B."/>
            <person name="Dang V.-D."/>
            <person name="de Haan M."/>
            <person name="Delius H."/>
            <person name="Durand P."/>
            <person name="Fairhead C."/>
            <person name="Feldmann H."/>
            <person name="Gaillon L."/>
            <person name="Galisson F."/>
            <person name="Gamo F.-J."/>
            <person name="Gancedo C."/>
            <person name="Goffeau A."/>
            <person name="Goulding S.E."/>
            <person name="Grivell L.A."/>
            <person name="Habbig B."/>
            <person name="Hand N.J."/>
            <person name="Hani J."/>
            <person name="Hattenhorst U."/>
            <person name="Hebling U."/>
            <person name="Hernando Y."/>
            <person name="Herrero E."/>
            <person name="Heumann K."/>
            <person name="Hiesel R."/>
            <person name="Hilger F."/>
            <person name="Hofmann B."/>
            <person name="Hollenberg C.P."/>
            <person name="Hughes B."/>
            <person name="Jauniaux J.-C."/>
            <person name="Kalogeropoulos A."/>
            <person name="Katsoulou C."/>
            <person name="Kordes E."/>
            <person name="Lafuente M.J."/>
            <person name="Landt O."/>
            <person name="Louis E.J."/>
            <person name="Maarse A.C."/>
            <person name="Madania A."/>
            <person name="Mannhaupt G."/>
            <person name="Marck C."/>
            <person name="Martin R.P."/>
            <person name="Mewes H.-W."/>
            <person name="Michaux G."/>
            <person name="Paces V."/>
            <person name="Parle-McDermott A.G."/>
            <person name="Pearson B.M."/>
            <person name="Perrin A."/>
            <person name="Pettersson B."/>
            <person name="Poch O."/>
            <person name="Pohl T.M."/>
            <person name="Poirey R."/>
            <person name="Portetelle D."/>
            <person name="Pujol A."/>
            <person name="Purnelle B."/>
            <person name="Ramezani Rad M."/>
            <person name="Rechmann S."/>
            <person name="Schwager C."/>
            <person name="Schweizer M."/>
            <person name="Sor F."/>
            <person name="Sterky F."/>
            <person name="Tarassov I.A."/>
            <person name="Teodoru C."/>
            <person name="Tettelin H."/>
            <person name="Thierry A."/>
            <person name="Tobiasch E."/>
            <person name="Tzermia M."/>
            <person name="Uhlen M."/>
            <person name="Unseld M."/>
            <person name="Valens M."/>
            <person name="Vandenbol M."/>
            <person name="Vetter I."/>
            <person name="Vlcek C."/>
            <person name="Voet M."/>
            <person name="Volckaert G."/>
            <person name="Voss H."/>
            <person name="Wambutt R."/>
            <person name="Wedler H."/>
            <person name="Wiemann S."/>
            <person name="Winsor B."/>
            <person name="Wolfe K.H."/>
            <person name="Zollner A."/>
            <person name="Zumstein E."/>
            <person name="Kleine K."/>
        </authorList>
    </citation>
    <scope>NUCLEOTIDE SEQUENCE [LARGE SCALE GENOMIC DNA]</scope>
    <source>
        <strain>ATCC 204508 / S288c</strain>
    </source>
</reference>
<reference key="5">
    <citation type="journal article" date="2014" name="G3 (Bethesda)">
        <title>The reference genome sequence of Saccharomyces cerevisiae: Then and now.</title>
        <authorList>
            <person name="Engel S.R."/>
            <person name="Dietrich F.S."/>
            <person name="Fisk D.G."/>
            <person name="Binkley G."/>
            <person name="Balakrishnan R."/>
            <person name="Costanzo M.C."/>
            <person name="Dwight S.S."/>
            <person name="Hitz B.C."/>
            <person name="Karra K."/>
            <person name="Nash R.S."/>
            <person name="Weng S."/>
            <person name="Wong E.D."/>
            <person name="Lloyd P."/>
            <person name="Skrzypek M.S."/>
            <person name="Miyasato S.R."/>
            <person name="Simison M."/>
            <person name="Cherry J.M."/>
        </authorList>
    </citation>
    <scope>GENOME REANNOTATION</scope>
    <source>
        <strain>ATCC 204508 / S288c</strain>
    </source>
</reference>
<accession>P41834</accession>
<accession>D6W2D8</accession>
<dbReference type="EMBL" id="L15081">
    <property type="protein sequence ID" value="AAC13730.1"/>
    <property type="molecule type" value="Genomic_DNA"/>
</dbReference>
<dbReference type="EMBL" id="U53416">
    <property type="protein sequence ID" value="AAB50196.1"/>
    <property type="molecule type" value="Genomic_DNA"/>
</dbReference>
<dbReference type="EMBL" id="Z74983">
    <property type="protein sequence ID" value="CAA99268.1"/>
    <property type="molecule type" value="Genomic_DNA"/>
</dbReference>
<dbReference type="EMBL" id="Z70678">
    <property type="protein sequence ID" value="CAA94560.1"/>
    <property type="molecule type" value="Genomic_DNA"/>
</dbReference>
<dbReference type="EMBL" id="BK006948">
    <property type="protein sequence ID" value="DAA10854.1"/>
    <property type="molecule type" value="Genomic_DNA"/>
</dbReference>
<dbReference type="PIR" id="S66958">
    <property type="entry name" value="S66958"/>
</dbReference>
<dbReference type="RefSeq" id="NP_014718.1">
    <property type="nucleotide sequence ID" value="NM_001183494.1"/>
</dbReference>
<dbReference type="SMR" id="P41834"/>
<dbReference type="BioGRID" id="34474">
    <property type="interactions" value="160"/>
</dbReference>
<dbReference type="ComplexPortal" id="CPX-5304">
    <property type="entry name" value="Endoplasmic reticulum snare complex UFE1-USE1-SEC20-SEC22"/>
</dbReference>
<dbReference type="DIP" id="DIP-2942N"/>
<dbReference type="FunCoup" id="P41834">
    <property type="interactions" value="361"/>
</dbReference>
<dbReference type="IntAct" id="P41834">
    <property type="interactions" value="13"/>
</dbReference>
<dbReference type="MINT" id="P41834"/>
<dbReference type="STRING" id="4932.YOR075W"/>
<dbReference type="MoonDB" id="P41834">
    <property type="type" value="Predicted"/>
</dbReference>
<dbReference type="iPTMnet" id="P41834"/>
<dbReference type="PaxDb" id="4932-YOR075W"/>
<dbReference type="PeptideAtlas" id="P41834"/>
<dbReference type="EnsemblFungi" id="YOR075W_mRNA">
    <property type="protein sequence ID" value="YOR075W"/>
    <property type="gene ID" value="YOR075W"/>
</dbReference>
<dbReference type="GeneID" id="854242"/>
<dbReference type="KEGG" id="sce:YOR075W"/>
<dbReference type="AGR" id="SGD:S000005601"/>
<dbReference type="SGD" id="S000005601">
    <property type="gene designation" value="UFE1"/>
</dbReference>
<dbReference type="VEuPathDB" id="FungiDB:YOR075W"/>
<dbReference type="eggNOG" id="KOG3894">
    <property type="taxonomic scope" value="Eukaryota"/>
</dbReference>
<dbReference type="GeneTree" id="ENSGT00390000014853"/>
<dbReference type="HOGENOM" id="CLU_069210_1_0_1"/>
<dbReference type="InParanoid" id="P41834"/>
<dbReference type="OMA" id="YRIRTHI"/>
<dbReference type="OrthoDB" id="342981at2759"/>
<dbReference type="BioCyc" id="YEAST:G3O-33612-MONOMER"/>
<dbReference type="Reactome" id="R-SCE-6811434">
    <property type="pathway name" value="COPI-dependent Golgi-to-ER retrograde traffic"/>
</dbReference>
<dbReference type="BioGRID-ORCS" id="854242">
    <property type="hits" value="3 hits in 10 CRISPR screens"/>
</dbReference>
<dbReference type="PRO" id="PR:P41834"/>
<dbReference type="Proteomes" id="UP000002311">
    <property type="component" value="Chromosome XV"/>
</dbReference>
<dbReference type="RNAct" id="P41834">
    <property type="molecule type" value="protein"/>
</dbReference>
<dbReference type="GO" id="GO:0098554">
    <property type="term" value="C:cytoplasmic side of endoplasmic reticulum membrane"/>
    <property type="evidence" value="ECO:0000303"/>
    <property type="project" value="ComplexPortal"/>
</dbReference>
<dbReference type="GO" id="GO:0005783">
    <property type="term" value="C:endoplasmic reticulum"/>
    <property type="evidence" value="ECO:0000314"/>
    <property type="project" value="SGD"/>
</dbReference>
<dbReference type="GO" id="GO:0012508">
    <property type="term" value="C:Golgi to ER transport vesicle membrane"/>
    <property type="evidence" value="ECO:0000303"/>
    <property type="project" value="ComplexPortal"/>
</dbReference>
<dbReference type="GO" id="GO:0031201">
    <property type="term" value="C:SNARE complex"/>
    <property type="evidence" value="ECO:0000314"/>
    <property type="project" value="SGD"/>
</dbReference>
<dbReference type="GO" id="GO:0005484">
    <property type="term" value="F:SNAP receptor activity"/>
    <property type="evidence" value="ECO:0000247"/>
    <property type="project" value="SGD"/>
</dbReference>
<dbReference type="GO" id="GO:0016320">
    <property type="term" value="P:endoplasmic reticulum membrane fusion"/>
    <property type="evidence" value="ECO:0000315"/>
    <property type="project" value="SGD"/>
</dbReference>
<dbReference type="GO" id="GO:0015031">
    <property type="term" value="P:protein transport"/>
    <property type="evidence" value="ECO:0007669"/>
    <property type="project" value="UniProtKB-KW"/>
</dbReference>
<dbReference type="GO" id="GO:0006890">
    <property type="term" value="P:retrograde vesicle-mediated transport, Golgi to endoplasmic reticulum"/>
    <property type="evidence" value="ECO:0000315"/>
    <property type="project" value="SGD"/>
</dbReference>
<dbReference type="GO" id="GO:0048279">
    <property type="term" value="P:vesicle fusion with endoplasmic reticulum"/>
    <property type="evidence" value="ECO:0000303"/>
    <property type="project" value="ComplexPortal"/>
</dbReference>
<dbReference type="CDD" id="cd15850">
    <property type="entry name" value="SNARE_syntaxin18"/>
    <property type="match status" value="1"/>
</dbReference>
<dbReference type="FunFam" id="1.20.5.110:FF:000082">
    <property type="entry name" value="t-SNARE (ER)"/>
    <property type="match status" value="1"/>
</dbReference>
<dbReference type="Gene3D" id="1.20.5.110">
    <property type="match status" value="1"/>
</dbReference>
<dbReference type="InterPro" id="IPR019529">
    <property type="entry name" value="Syntaxin-18_N"/>
</dbReference>
<dbReference type="InterPro" id="IPR000727">
    <property type="entry name" value="T_SNARE_dom"/>
</dbReference>
<dbReference type="PANTHER" id="PTHR15959">
    <property type="entry name" value="SYNTAXIN-18"/>
    <property type="match status" value="1"/>
</dbReference>
<dbReference type="PANTHER" id="PTHR15959:SF0">
    <property type="entry name" value="SYNTAXIN-18"/>
    <property type="match status" value="1"/>
</dbReference>
<dbReference type="Pfam" id="PF10496">
    <property type="entry name" value="Syntaxin-18_N"/>
    <property type="match status" value="1"/>
</dbReference>
<dbReference type="SMART" id="SM00397">
    <property type="entry name" value="t_SNARE"/>
    <property type="match status" value="1"/>
</dbReference>
<dbReference type="SUPFAM" id="SSF58038">
    <property type="entry name" value="SNARE fusion complex"/>
    <property type="match status" value="1"/>
</dbReference>
<dbReference type="PROSITE" id="PS50192">
    <property type="entry name" value="T_SNARE"/>
    <property type="match status" value="1"/>
</dbReference>
<comment type="function">
    <text>Syntaxin required for targeting and fusion of Golgi-derived retrograde transport vesicles with the ER.</text>
</comment>
<comment type="subunit">
    <text>Component of a SNARE complex consisting of UFE1, USE1, SEC20 and SEC22 or YKT6.</text>
</comment>
<comment type="interaction">
    <interactant intactId="EBI-20016">
        <id>P41834</id>
    </interactant>
    <interactant intactId="EBI-16572">
        <id>P28791</id>
        <label>SEC20</label>
    </interactant>
    <organismsDiffer>false</organismsDiffer>
    <experiments>6</experiments>
</comment>
<comment type="interaction">
    <interactant intactId="EBI-20016">
        <id>P41834</id>
    </interactant>
    <interactant intactId="EBI-16577">
        <id>P22214</id>
        <label>SEC22</label>
    </interactant>
    <organismsDiffer>false</organismsDiffer>
    <experiments>4</experiments>
</comment>
<comment type="interaction">
    <interactant intactId="EBI-20016">
        <id>P41834</id>
    </interactant>
    <interactant intactId="EBI-17387">
        <id>P22213</id>
        <label>SLY1</label>
    </interactant>
    <organismsDiffer>false</organismsDiffer>
    <experiments>4</experiments>
</comment>
<comment type="interaction">
    <interactant intactId="EBI-20016">
        <id>P41834</id>
    </interactant>
    <interactant intactId="EBI-19396">
        <id>P33891</id>
        <label>TIP20</label>
    </interactant>
    <organismsDiffer>false</organismsDiffer>
    <experiments>3</experiments>
</comment>
<comment type="interaction">
    <interactant intactId="EBI-20016">
        <id>P41834</id>
    </interactant>
    <interactant intactId="EBI-23881">
        <id>P53146</id>
        <label>USE1</label>
    </interactant>
    <organismsDiffer>false</organismsDiffer>
    <experiments>3</experiments>
</comment>
<comment type="subcellular location">
    <subcellularLocation>
        <location>Endoplasmic reticulum membrane</location>
        <topology>Single-pass type IV membrane protein</topology>
    </subcellularLocation>
</comment>
<comment type="similarity">
    <text evidence="3">Belongs to the syntaxin family.</text>
</comment>
<proteinExistence type="evidence at protein level"/>
<protein>
    <recommendedName>
        <fullName>Syntaxin UFE1</fullName>
    </recommendedName>
</protein>
<gene>
    <name type="primary">UFE1</name>
    <name type="ordered locus">YOR075W</name>
    <name type="ORF">YOR29-26</name>
</gene>
<evidence type="ECO:0000255" key="1"/>
<evidence type="ECO:0000255" key="2">
    <source>
        <dbReference type="PROSITE-ProRule" id="PRU00202"/>
    </source>
</evidence>
<evidence type="ECO:0000305" key="3"/>
<feature type="chain" id="PRO_0000210283" description="Syntaxin UFE1">
    <location>
        <begin position="1"/>
        <end position="346"/>
    </location>
</feature>
<feature type="topological domain" description="Cytoplasmic" evidence="1">
    <location>
        <begin position="1"/>
        <end position="324"/>
    </location>
</feature>
<feature type="transmembrane region" description="Helical; Anchor for type IV membrane protein" evidence="1">
    <location>
        <begin position="325"/>
        <end position="342"/>
    </location>
</feature>
<feature type="topological domain" description="Lumenal" evidence="1">
    <location>
        <begin position="343"/>
        <end position="346"/>
    </location>
</feature>
<feature type="domain" description="t-SNARE coiled-coil homology" evidence="2">
    <location>
        <begin position="255"/>
        <end position="317"/>
    </location>
</feature>
<keyword id="KW-0175">Coiled coil</keyword>
<keyword id="KW-0256">Endoplasmic reticulum</keyword>
<keyword id="KW-0931">ER-Golgi transport</keyword>
<keyword id="KW-0472">Membrane</keyword>
<keyword id="KW-0653">Protein transport</keyword>
<keyword id="KW-1185">Reference proteome</keyword>
<keyword id="KW-0812">Transmembrane</keyword>
<keyword id="KW-1133">Transmembrane helix</keyword>
<keyword id="KW-0813">Transport</keyword>
<organism>
    <name type="scientific">Saccharomyces cerevisiae (strain ATCC 204508 / S288c)</name>
    <name type="common">Baker's yeast</name>
    <dbReference type="NCBI Taxonomy" id="559292"/>
    <lineage>
        <taxon>Eukaryota</taxon>
        <taxon>Fungi</taxon>
        <taxon>Dikarya</taxon>
        <taxon>Ascomycota</taxon>
        <taxon>Saccharomycotina</taxon>
        <taxon>Saccharomycetes</taxon>
        <taxon>Saccharomycetales</taxon>
        <taxon>Saccharomycetaceae</taxon>
        <taxon>Saccharomyces</taxon>
    </lineage>
</organism>